<evidence type="ECO:0000250" key="1">
    <source>
        <dbReference type="UniProtKB" id="Q61410"/>
    </source>
</evidence>
<evidence type="ECO:0000250" key="2">
    <source>
        <dbReference type="UniProtKB" id="Q64595"/>
    </source>
</evidence>
<evidence type="ECO:0000255" key="3"/>
<evidence type="ECO:0000255" key="4">
    <source>
        <dbReference type="PROSITE-ProRule" id="PRU00159"/>
    </source>
</evidence>
<evidence type="ECO:0000255" key="5">
    <source>
        <dbReference type="PROSITE-ProRule" id="PRU00618"/>
    </source>
</evidence>
<evidence type="ECO:0000255" key="6">
    <source>
        <dbReference type="PROSITE-ProRule" id="PRU10027"/>
    </source>
</evidence>
<evidence type="ECO:0000256" key="7">
    <source>
        <dbReference type="SAM" id="MobiDB-lite"/>
    </source>
</evidence>
<evidence type="ECO:0000269" key="8">
    <source>
    </source>
</evidence>
<evidence type="ECO:0000269" key="9">
    <source>
    </source>
</evidence>
<evidence type="ECO:0000269" key="10">
    <source>
    </source>
</evidence>
<evidence type="ECO:0000269" key="11">
    <source>
    </source>
</evidence>
<evidence type="ECO:0000269" key="12">
    <source>
    </source>
</evidence>
<evidence type="ECO:0000303" key="13">
    <source>
    </source>
</evidence>
<evidence type="ECO:0000305" key="14"/>
<evidence type="ECO:0000305" key="15">
    <source>
    </source>
</evidence>
<evidence type="ECO:0000312" key="16">
    <source>
        <dbReference type="PDB" id="5BV6"/>
    </source>
</evidence>
<evidence type="ECO:0007744" key="17">
    <source>
        <dbReference type="PDB" id="5BV6"/>
    </source>
</evidence>
<evidence type="ECO:0007744" key="18">
    <source>
        <dbReference type="PDB" id="5C6C"/>
    </source>
</evidence>
<evidence type="ECO:0007744" key="19">
    <source>
        <dbReference type="PDB" id="5C8W"/>
    </source>
</evidence>
<evidence type="ECO:0007829" key="20">
    <source>
        <dbReference type="PDB" id="5C8W"/>
    </source>
</evidence>
<evidence type="ECO:0007829" key="21">
    <source>
        <dbReference type="PDB" id="5JIX"/>
    </source>
</evidence>
<comment type="function">
    <text evidence="1 2 10">Crucial regulator of intestinal secretion and bone growth. Phosphorylates and activates CFTR on the plasma membrane. Plays a key role in intestinal secretion by regulating cGMP-dependent translocation of CFTR in jejunum (PubMed:33106379). Acts downstream of NMDAR to activate the plasma membrane accumulation of GRIA1/GLUR1 in synapse and increase synaptic plasticity. Phosphorylates GRIA1/GLUR1 at Ser-863 (By similarity). Acts as a regulator of gene expression and activator of the extracellular signal-regulated kinases MAPK3/ERK1 and MAPK1/ERK2 in mechanically stimulated osteoblasts. Under fluid shear stress, mediates ERK activation and subsequent induction of FOS, FOSL1/FRA1, FOSL2/FRA2 and FOSB that play a key role in the osteoblast anabolic response to mechanical stimulation (By similarity).</text>
</comment>
<comment type="catalytic activity">
    <reaction>
        <text>L-seryl-[protein] + ATP = O-phospho-L-seryl-[protein] + ADP + H(+)</text>
        <dbReference type="Rhea" id="RHEA:17989"/>
        <dbReference type="Rhea" id="RHEA-COMP:9863"/>
        <dbReference type="Rhea" id="RHEA-COMP:11604"/>
        <dbReference type="ChEBI" id="CHEBI:15378"/>
        <dbReference type="ChEBI" id="CHEBI:29999"/>
        <dbReference type="ChEBI" id="CHEBI:30616"/>
        <dbReference type="ChEBI" id="CHEBI:83421"/>
        <dbReference type="ChEBI" id="CHEBI:456216"/>
        <dbReference type="EC" id="2.7.11.12"/>
    </reaction>
</comment>
<comment type="catalytic activity">
    <reaction>
        <text>L-threonyl-[protein] + ATP = O-phospho-L-threonyl-[protein] + ADP + H(+)</text>
        <dbReference type="Rhea" id="RHEA:46608"/>
        <dbReference type="Rhea" id="RHEA-COMP:11060"/>
        <dbReference type="Rhea" id="RHEA-COMP:11605"/>
        <dbReference type="ChEBI" id="CHEBI:15378"/>
        <dbReference type="ChEBI" id="CHEBI:30013"/>
        <dbReference type="ChEBI" id="CHEBI:30616"/>
        <dbReference type="ChEBI" id="CHEBI:61977"/>
        <dbReference type="ChEBI" id="CHEBI:456216"/>
        <dbReference type="EC" id="2.7.11.12"/>
    </reaction>
</comment>
<comment type="activity regulation">
    <text evidence="9">Binding of cGMP results in enzyme activation.</text>
</comment>
<comment type="subunit">
    <text evidence="2">Interacts with GRIA1/GLUR1.</text>
</comment>
<comment type="subcellular location">
    <subcellularLocation>
        <location evidence="12">Apical cell membrane</location>
        <topology evidence="12">Lipid-anchor</topology>
    </subcellularLocation>
</comment>
<comment type="alternative products">
    <event type="alternative splicing"/>
    <isoform>
        <id>Q13237-1</id>
        <name>1</name>
        <sequence type="displayed"/>
    </isoform>
    <isoform>
        <id>Q13237-2</id>
        <name>2</name>
        <sequence type="described" ref="VSP_055121"/>
    </isoform>
</comment>
<comment type="tissue specificity">
    <text>Highly concentrated in brain, lung and intestinal mucosa.</text>
</comment>
<comment type="PTM">
    <text evidence="12">Myristoylation mediates membrane localization.</text>
</comment>
<comment type="disease" evidence="11">
    <disease id="DI-06277">
        <name>Spondylometaphyseal dysplasia, Pagnamenta type</name>
        <acronym>SMDP</acronym>
        <description>A form of spondylometaphyseal dysplasia, a group of short stature disorders distinguished by abnormalities in the vertebrae and the metaphyses of the tubular bones. SMDP is an autosomal recessive form characterized by short stature and mild platyspondyly with no disproportion between the limbs. Mild metaphyseal changes are present.</description>
        <dbReference type="MIM" id="619638"/>
    </disease>
    <text>The disease is caused by variants affecting the gene represented in this entry.</text>
</comment>
<comment type="disease" evidence="10 11">
    <disease id="DI-06276">
        <name>Acromesomelic dysplasia 4</name>
        <acronym>AMD4</acronym>
        <description>A form of acromesomelic dysplasia, a skeletal disorder characterized by short stature, very short limbs and hand/foot malformations. The severity of limb abnormalities increases from proximal to distal with profoundly affected hands and feet showing brachydactyly and/or rudimentary fingers (knob-like fingers). AMD4 radiographic hallmarks include mild to moderate platyspondyly, moderate brachydactyly, iliac flaring, and metaphyseal alterations of the long bones that progressively increase with age. AMD4 inheritance is autosomal recessive.</description>
        <dbReference type="MIM" id="619636"/>
    </disease>
    <text>The disease is caused by variants affecting the gene represented in this entry.</text>
</comment>
<comment type="similarity">
    <text evidence="14">Belongs to the protein kinase superfamily. AGC Ser/Thr protein kinase family. cGMP subfamily.</text>
</comment>
<reference key="1">
    <citation type="journal article" date="1996" name="Biochem. Biophys. Res. Commun.">
        <title>Molecular cloning, cDNA structure, and chromosomal localization of the human type II cGMP-dependent protein kinase.</title>
        <authorList>
            <person name="Orstavik S."/>
            <person name="Solberg R."/>
            <person name="Taskn K."/>
            <person name="Nordahl M."/>
            <person name="Altherr M.R."/>
            <person name="Hansson V."/>
            <person name="Jahnsen T."/>
            <person name="Sandberg M."/>
        </authorList>
    </citation>
    <scope>NUCLEOTIDE SEQUENCE [MRNA]</scope>
</reference>
<reference key="2">
    <citation type="journal article" date="1995" name="FEBS Lett.">
        <title>Expression of the human cGMP-dependent protein kinase II gene is lost upon introduction of SV40 T antigen or immortalization in human cells.</title>
        <authorList>
            <person name="Fujii M."/>
            <person name="Ogata T."/>
            <person name="Takahashi E."/>
            <person name="Yamada K."/>
            <person name="Nakabayashi K."/>
            <person name="Oishi M."/>
            <person name="Ayusawa D."/>
        </authorList>
    </citation>
    <scope>NUCLEOTIDE SEQUENCE [MRNA]</scope>
</reference>
<reference key="3">
    <citation type="journal article" date="2004" name="Nat. Genet.">
        <title>Complete sequencing and characterization of 21,243 full-length human cDNAs.</title>
        <authorList>
            <person name="Ota T."/>
            <person name="Suzuki Y."/>
            <person name="Nishikawa T."/>
            <person name="Otsuki T."/>
            <person name="Sugiyama T."/>
            <person name="Irie R."/>
            <person name="Wakamatsu A."/>
            <person name="Hayashi K."/>
            <person name="Sato H."/>
            <person name="Nagai K."/>
            <person name="Kimura K."/>
            <person name="Makita H."/>
            <person name="Sekine M."/>
            <person name="Obayashi M."/>
            <person name="Nishi T."/>
            <person name="Shibahara T."/>
            <person name="Tanaka T."/>
            <person name="Ishii S."/>
            <person name="Yamamoto J."/>
            <person name="Saito K."/>
            <person name="Kawai Y."/>
            <person name="Isono Y."/>
            <person name="Nakamura Y."/>
            <person name="Nagahari K."/>
            <person name="Murakami K."/>
            <person name="Yasuda T."/>
            <person name="Iwayanagi T."/>
            <person name="Wagatsuma M."/>
            <person name="Shiratori A."/>
            <person name="Sudo H."/>
            <person name="Hosoiri T."/>
            <person name="Kaku Y."/>
            <person name="Kodaira H."/>
            <person name="Kondo H."/>
            <person name="Sugawara M."/>
            <person name="Takahashi M."/>
            <person name="Kanda K."/>
            <person name="Yokoi T."/>
            <person name="Furuya T."/>
            <person name="Kikkawa E."/>
            <person name="Omura Y."/>
            <person name="Abe K."/>
            <person name="Kamihara K."/>
            <person name="Katsuta N."/>
            <person name="Sato K."/>
            <person name="Tanikawa M."/>
            <person name="Yamazaki M."/>
            <person name="Ninomiya K."/>
            <person name="Ishibashi T."/>
            <person name="Yamashita H."/>
            <person name="Murakawa K."/>
            <person name="Fujimori K."/>
            <person name="Tanai H."/>
            <person name="Kimata M."/>
            <person name="Watanabe M."/>
            <person name="Hiraoka S."/>
            <person name="Chiba Y."/>
            <person name="Ishida S."/>
            <person name="Ono Y."/>
            <person name="Takiguchi S."/>
            <person name="Watanabe S."/>
            <person name="Yosida M."/>
            <person name="Hotuta T."/>
            <person name="Kusano J."/>
            <person name="Kanehori K."/>
            <person name="Takahashi-Fujii A."/>
            <person name="Hara H."/>
            <person name="Tanase T.-O."/>
            <person name="Nomura Y."/>
            <person name="Togiya S."/>
            <person name="Komai F."/>
            <person name="Hara R."/>
            <person name="Takeuchi K."/>
            <person name="Arita M."/>
            <person name="Imose N."/>
            <person name="Musashino K."/>
            <person name="Yuuki H."/>
            <person name="Oshima A."/>
            <person name="Sasaki N."/>
            <person name="Aotsuka S."/>
            <person name="Yoshikawa Y."/>
            <person name="Matsunawa H."/>
            <person name="Ichihara T."/>
            <person name="Shiohata N."/>
            <person name="Sano S."/>
            <person name="Moriya S."/>
            <person name="Momiyama H."/>
            <person name="Satoh N."/>
            <person name="Takami S."/>
            <person name="Terashima Y."/>
            <person name="Suzuki O."/>
            <person name="Nakagawa S."/>
            <person name="Senoh A."/>
            <person name="Mizoguchi H."/>
            <person name="Goto Y."/>
            <person name="Shimizu F."/>
            <person name="Wakebe H."/>
            <person name="Hishigaki H."/>
            <person name="Watanabe T."/>
            <person name="Sugiyama A."/>
            <person name="Takemoto M."/>
            <person name="Kawakami B."/>
            <person name="Yamazaki M."/>
            <person name="Watanabe K."/>
            <person name="Kumagai A."/>
            <person name="Itakura S."/>
            <person name="Fukuzumi Y."/>
            <person name="Fujimori Y."/>
            <person name="Komiyama M."/>
            <person name="Tashiro H."/>
            <person name="Tanigami A."/>
            <person name="Fujiwara T."/>
            <person name="Ono T."/>
            <person name="Yamada K."/>
            <person name="Fujii Y."/>
            <person name="Ozaki K."/>
            <person name="Hirao M."/>
            <person name="Ohmori Y."/>
            <person name="Kawabata A."/>
            <person name="Hikiji T."/>
            <person name="Kobatake N."/>
            <person name="Inagaki H."/>
            <person name="Ikema Y."/>
            <person name="Okamoto S."/>
            <person name="Okitani R."/>
            <person name="Kawakami T."/>
            <person name="Noguchi S."/>
            <person name="Itoh T."/>
            <person name="Shigeta K."/>
            <person name="Senba T."/>
            <person name="Matsumura K."/>
            <person name="Nakajima Y."/>
            <person name="Mizuno T."/>
            <person name="Morinaga M."/>
            <person name="Sasaki M."/>
            <person name="Togashi T."/>
            <person name="Oyama M."/>
            <person name="Hata H."/>
            <person name="Watanabe M."/>
            <person name="Komatsu T."/>
            <person name="Mizushima-Sugano J."/>
            <person name="Satoh T."/>
            <person name="Shirai Y."/>
            <person name="Takahashi Y."/>
            <person name="Nakagawa K."/>
            <person name="Okumura K."/>
            <person name="Nagase T."/>
            <person name="Nomura N."/>
            <person name="Kikuchi H."/>
            <person name="Masuho Y."/>
            <person name="Yamashita R."/>
            <person name="Nakai K."/>
            <person name="Yada T."/>
            <person name="Nakamura Y."/>
            <person name="Ohara O."/>
            <person name="Isogai T."/>
            <person name="Sugano S."/>
        </authorList>
    </citation>
    <scope>NUCLEOTIDE SEQUENCE [LARGE SCALE MRNA] (ISOFORM 2)</scope>
    <source>
        <tissue>Heart</tissue>
    </source>
</reference>
<reference key="4">
    <citation type="journal article" date="2005" name="Nature">
        <title>Generation and annotation of the DNA sequences of human chromosomes 2 and 4.</title>
        <authorList>
            <person name="Hillier L.W."/>
            <person name="Graves T.A."/>
            <person name="Fulton R.S."/>
            <person name="Fulton L.A."/>
            <person name="Pepin K.H."/>
            <person name="Minx P."/>
            <person name="Wagner-McPherson C."/>
            <person name="Layman D."/>
            <person name="Wylie K."/>
            <person name="Sekhon M."/>
            <person name="Becker M.C."/>
            <person name="Fewell G.A."/>
            <person name="Delehaunty K.D."/>
            <person name="Miner T.L."/>
            <person name="Nash W.E."/>
            <person name="Kremitzki C."/>
            <person name="Oddy L."/>
            <person name="Du H."/>
            <person name="Sun H."/>
            <person name="Bradshaw-Cordum H."/>
            <person name="Ali J."/>
            <person name="Carter J."/>
            <person name="Cordes M."/>
            <person name="Harris A."/>
            <person name="Isak A."/>
            <person name="van Brunt A."/>
            <person name="Nguyen C."/>
            <person name="Du F."/>
            <person name="Courtney L."/>
            <person name="Kalicki J."/>
            <person name="Ozersky P."/>
            <person name="Abbott S."/>
            <person name="Armstrong J."/>
            <person name="Belter E.A."/>
            <person name="Caruso L."/>
            <person name="Cedroni M."/>
            <person name="Cotton M."/>
            <person name="Davidson T."/>
            <person name="Desai A."/>
            <person name="Elliott G."/>
            <person name="Erb T."/>
            <person name="Fronick C."/>
            <person name="Gaige T."/>
            <person name="Haakenson W."/>
            <person name="Haglund K."/>
            <person name="Holmes A."/>
            <person name="Harkins R."/>
            <person name="Kim K."/>
            <person name="Kruchowski S.S."/>
            <person name="Strong C.M."/>
            <person name="Grewal N."/>
            <person name="Goyea E."/>
            <person name="Hou S."/>
            <person name="Levy A."/>
            <person name="Martinka S."/>
            <person name="Mead K."/>
            <person name="McLellan M.D."/>
            <person name="Meyer R."/>
            <person name="Randall-Maher J."/>
            <person name="Tomlinson C."/>
            <person name="Dauphin-Kohlberg S."/>
            <person name="Kozlowicz-Reilly A."/>
            <person name="Shah N."/>
            <person name="Swearengen-Shahid S."/>
            <person name="Snider J."/>
            <person name="Strong J.T."/>
            <person name="Thompson J."/>
            <person name="Yoakum M."/>
            <person name="Leonard S."/>
            <person name="Pearman C."/>
            <person name="Trani L."/>
            <person name="Radionenko M."/>
            <person name="Waligorski J.E."/>
            <person name="Wang C."/>
            <person name="Rock S.M."/>
            <person name="Tin-Wollam A.-M."/>
            <person name="Maupin R."/>
            <person name="Latreille P."/>
            <person name="Wendl M.C."/>
            <person name="Yang S.-P."/>
            <person name="Pohl C."/>
            <person name="Wallis J.W."/>
            <person name="Spieth J."/>
            <person name="Bieri T.A."/>
            <person name="Berkowicz N."/>
            <person name="Nelson J.O."/>
            <person name="Osborne J."/>
            <person name="Ding L."/>
            <person name="Meyer R."/>
            <person name="Sabo A."/>
            <person name="Shotland Y."/>
            <person name="Sinha P."/>
            <person name="Wohldmann P.E."/>
            <person name="Cook L.L."/>
            <person name="Hickenbotham M.T."/>
            <person name="Eldred J."/>
            <person name="Williams D."/>
            <person name="Jones T.A."/>
            <person name="She X."/>
            <person name="Ciccarelli F.D."/>
            <person name="Izaurralde E."/>
            <person name="Taylor J."/>
            <person name="Schmutz J."/>
            <person name="Myers R.M."/>
            <person name="Cox D.R."/>
            <person name="Huang X."/>
            <person name="McPherson J.D."/>
            <person name="Mardis E.R."/>
            <person name="Clifton S.W."/>
            <person name="Warren W.C."/>
            <person name="Chinwalla A.T."/>
            <person name="Eddy S.R."/>
            <person name="Marra M.A."/>
            <person name="Ovcharenko I."/>
            <person name="Furey T.S."/>
            <person name="Miller W."/>
            <person name="Eichler E.E."/>
            <person name="Bork P."/>
            <person name="Suyama M."/>
            <person name="Torrents D."/>
            <person name="Waterston R.H."/>
            <person name="Wilson R.K."/>
        </authorList>
    </citation>
    <scope>NUCLEOTIDE SEQUENCE [LARGE SCALE GENOMIC DNA]</scope>
</reference>
<reference key="5">
    <citation type="journal article" date="1998" name="Biochem. Biophys. Res. Commun.">
        <title>Characterization of the gene encoding the human type II cGMP-dependent protein kinase.</title>
        <authorList>
            <person name="Witczak O."/>
            <person name="Orstavik S."/>
            <person name="Natarajan V."/>
            <person name="Frengen E."/>
            <person name="Jahnsen T."/>
            <person name="Sandberg M."/>
        </authorList>
    </citation>
    <scope>NUCLEOTIDE SEQUENCE [GENOMIC DNA] OF 1-734</scope>
</reference>
<reference key="6">
    <citation type="journal article" date="1996" name="J. Biol. Chem.">
        <title>N-terminal myristoylation is required for membrane localization of cGMP-dependent protein kinase type II.</title>
        <authorList>
            <person name="Vaandrager A.B."/>
            <person name="Ehlert E.M."/>
            <person name="Jarchau T."/>
            <person name="Lohmann S.M."/>
            <person name="de Jonge H.R."/>
        </authorList>
    </citation>
    <scope>MYRISTOYLATION AT GLY-2</scope>
    <scope>SUBCELLULAR LOCATION</scope>
</reference>
<reference key="7">
    <citation type="journal article" date="2014" name="J. Proteomics">
        <title>An enzyme assisted RP-RPLC approach for in-depth analysis of human liver phosphoproteome.</title>
        <authorList>
            <person name="Bian Y."/>
            <person name="Song C."/>
            <person name="Cheng K."/>
            <person name="Dong M."/>
            <person name="Wang F."/>
            <person name="Huang J."/>
            <person name="Sun D."/>
            <person name="Wang L."/>
            <person name="Ye M."/>
            <person name="Zou H."/>
        </authorList>
    </citation>
    <scope>IDENTIFICATION BY MASS SPECTROMETRY [LARGE SCALE ANALYSIS]</scope>
    <source>
        <tissue>Liver</tissue>
    </source>
</reference>
<reference key="8">
    <citation type="journal article" date="2007" name="Nature">
        <title>Patterns of somatic mutation in human cancer genomes.</title>
        <authorList>
            <person name="Greenman C."/>
            <person name="Stephens P."/>
            <person name="Smith R."/>
            <person name="Dalgliesh G.L."/>
            <person name="Hunter C."/>
            <person name="Bignell G."/>
            <person name="Davies H."/>
            <person name="Teague J."/>
            <person name="Butler A."/>
            <person name="Stevens C."/>
            <person name="Edkins S."/>
            <person name="O'Meara S."/>
            <person name="Vastrik I."/>
            <person name="Schmidt E.E."/>
            <person name="Avis T."/>
            <person name="Barthorpe S."/>
            <person name="Bhamra G."/>
            <person name="Buck G."/>
            <person name="Choudhury B."/>
            <person name="Clements J."/>
            <person name="Cole J."/>
            <person name="Dicks E."/>
            <person name="Forbes S."/>
            <person name="Gray K."/>
            <person name="Halliday K."/>
            <person name="Harrison R."/>
            <person name="Hills K."/>
            <person name="Hinton J."/>
            <person name="Jenkinson A."/>
            <person name="Jones D."/>
            <person name="Menzies A."/>
            <person name="Mironenko T."/>
            <person name="Perry J."/>
            <person name="Raine K."/>
            <person name="Richardson D."/>
            <person name="Shepherd R."/>
            <person name="Small A."/>
            <person name="Tofts C."/>
            <person name="Varian J."/>
            <person name="Webb T."/>
            <person name="West S."/>
            <person name="Widaa S."/>
            <person name="Yates A."/>
            <person name="Cahill D.P."/>
            <person name="Louis D.N."/>
            <person name="Goldstraw P."/>
            <person name="Nicholson A.G."/>
            <person name="Brasseur F."/>
            <person name="Looijenga L."/>
            <person name="Weber B.L."/>
            <person name="Chiew Y.-E."/>
            <person name="DeFazio A."/>
            <person name="Greaves M.F."/>
            <person name="Green A.R."/>
            <person name="Campbell P."/>
            <person name="Birney E."/>
            <person name="Easton D.F."/>
            <person name="Chenevix-Trench G."/>
            <person name="Tan M.-H."/>
            <person name="Khoo S.K."/>
            <person name="Teh B.T."/>
            <person name="Yuen S.T."/>
            <person name="Leung S.Y."/>
            <person name="Wooster R."/>
            <person name="Futreal P.A."/>
            <person name="Stratton M.R."/>
        </authorList>
    </citation>
    <scope>VARIANTS [LARGE SCALE ANALYSIS] ARG-106 AND ARG-716</scope>
</reference>
<reference key="9">
    <citation type="journal article" date="2021" name="J. Med. Genet.">
        <title>Variable skeletal phenotypes associated with biallelic variants in PRKG2.</title>
        <authorList>
            <consortium name="Genomics England Research Consortium"/>
            <person name="Pagnamenta A.T."/>
            <person name="Diaz-Gonzalez F."/>
            <person name="Banos-Pinero B."/>
            <person name="Ferla M.P."/>
            <person name="Toosi M.B."/>
            <person name="Calder A.D."/>
            <person name="Karimiani E.G."/>
            <person name="Doosti M."/>
            <person name="Wainwright A."/>
            <person name="Wordsworth P."/>
            <person name="Bailey K."/>
            <person name="Ejeskaer K."/>
            <person name="Lester T."/>
            <person name="Maroofian R."/>
            <person name="Heath K.E."/>
            <person name="Tajsharghi H."/>
            <person name="Shears D."/>
            <person name="Taylor J.C."/>
        </authorList>
    </citation>
    <scope>INVOLVEMENT IN SMDP</scope>
    <scope>INVOLVEMENT IN AMD4</scope>
    <scope>VARIANT AMD4 569-ARG--PHE-762 DEL</scope>
    <scope>CHARACTERIZATION OF VARIANT AMD4 569-ARG--PHE-762 DEL</scope>
</reference>
<reference key="10">
    <citation type="journal article" date="2022" name="J. Med. Genet.">
        <title>Biallelic cGMP-dependent type II protein kinase gene (PRKG2) variants cause a novel acromesomelic dysplasia.</title>
        <authorList>
            <person name="Diaz-Gonzalez F."/>
            <person name="Wadhwa S."/>
            <person name="Rodriguez-Zabala M."/>
            <person name="Kumar S."/>
            <person name="Aza-Carmona M."/>
            <person name="Sentchordi-Montane L."/>
            <person name="Alonso M."/>
            <person name="Ahmad I."/>
            <person name="Zahra S."/>
            <person name="Kumar D."/>
            <person name="Kushwah N."/>
            <person name="Shamim U."/>
            <person name="Sait H."/>
            <person name="Kapoor S."/>
            <person name="Roldan B."/>
            <person name="Nishimura G."/>
            <person name="Offiah A.C."/>
            <person name="Faruq M."/>
            <person name="Heath K.E."/>
        </authorList>
    </citation>
    <scope>VARIANT AMD4 569-ARG--PHE-762 DEL</scope>
    <scope>CHARACTERIZATION OF VARIANT AMD4 569-ARG--PHE-762 DEL</scope>
    <scope>FUNCTION</scope>
</reference>
<reference key="11">
    <citation type="journal article" date="2016" name="J. Biol. Chem.">
        <title>Structural basis of cyclic nucleotide selectivity in cGMP-dependent protein kinase II.</title>
        <authorList>
            <person name="Campbell J.C."/>
            <person name="Kim J.J."/>
            <person name="Li K.Y."/>
            <person name="Huang G.Y."/>
            <person name="Reger A.S."/>
            <person name="Matsuda S."/>
            <person name="Sankaran B."/>
            <person name="Link T.M."/>
            <person name="Yuasa K."/>
            <person name="Ladbury J.E."/>
            <person name="Casteel D.E."/>
            <person name="Kim C."/>
        </authorList>
    </citation>
    <scope>X-RAY CRYSTALLOGRAPHY (1.80 ANGSTROMS) OF 137-418 IN COMPLEX WITH CAMP AND CGMP</scope>
    <scope>ACTIVITY REGULATION</scope>
    <scope>MUTAGENESIS OF ASP-412 AND ARG-415</scope>
</reference>
<name>KGP2_HUMAN</name>
<organism>
    <name type="scientific">Homo sapiens</name>
    <name type="common">Human</name>
    <dbReference type="NCBI Taxonomy" id="9606"/>
    <lineage>
        <taxon>Eukaryota</taxon>
        <taxon>Metazoa</taxon>
        <taxon>Chordata</taxon>
        <taxon>Craniata</taxon>
        <taxon>Vertebrata</taxon>
        <taxon>Euteleostomi</taxon>
        <taxon>Mammalia</taxon>
        <taxon>Eutheria</taxon>
        <taxon>Euarchontoglires</taxon>
        <taxon>Primates</taxon>
        <taxon>Haplorrhini</taxon>
        <taxon>Catarrhini</taxon>
        <taxon>Hominidae</taxon>
        <taxon>Homo</taxon>
    </lineage>
</organism>
<feature type="initiator methionine" description="Removed" evidence="12">
    <location>
        <position position="1"/>
    </location>
</feature>
<feature type="chain" id="PRO_0000086123" description="cGMP-dependent protein kinase 2">
    <location>
        <begin position="2"/>
        <end position="762"/>
    </location>
</feature>
<feature type="domain" description="Protein kinase" evidence="4">
    <location>
        <begin position="453"/>
        <end position="711"/>
    </location>
</feature>
<feature type="domain" description="AGC-kinase C-terminal" evidence="5">
    <location>
        <begin position="712"/>
        <end position="762"/>
    </location>
</feature>
<feature type="region of interest" description="Disordered" evidence="7">
    <location>
        <begin position="1"/>
        <end position="25"/>
    </location>
</feature>
<feature type="region of interest" description="Disordered" evidence="7">
    <location>
        <begin position="117"/>
        <end position="138"/>
    </location>
</feature>
<feature type="region of interest" description="cGMP-binding, high affinity; cAMP-binding, moderate affinity" evidence="15">
    <location>
        <begin position="168"/>
        <end position="283"/>
    </location>
</feature>
<feature type="region of interest" description="cGMP-binding, high affinity; cAMP-binding, low affinity" evidence="15">
    <location>
        <begin position="286"/>
        <end position="416"/>
    </location>
</feature>
<feature type="region of interest" description="Disordered" evidence="7">
    <location>
        <begin position="740"/>
        <end position="762"/>
    </location>
</feature>
<feature type="coiled-coil region" evidence="3">
    <location>
        <begin position="23"/>
        <end position="85"/>
    </location>
</feature>
<feature type="active site" description="Proton acceptor" evidence="4 6">
    <location>
        <position position="576"/>
    </location>
</feature>
<feature type="binding site" evidence="9 18">
    <location>
        <begin position="232"/>
        <end position="235"/>
    </location>
    <ligand>
        <name>3',5'-cyclic AMP</name>
        <dbReference type="ChEBI" id="CHEBI:58165"/>
    </ligand>
</feature>
<feature type="binding site" evidence="9 19">
    <location>
        <begin position="232"/>
        <end position="235"/>
    </location>
    <ligand>
        <name>3',5'-cyclic GMP</name>
        <dbReference type="ChEBI" id="CHEBI:57746"/>
        <label>1</label>
    </ligand>
</feature>
<feature type="binding site" evidence="9 18">
    <location>
        <begin position="242"/>
        <end position="243"/>
    </location>
    <ligand>
        <name>3',5'-cyclic AMP</name>
        <dbReference type="ChEBI" id="CHEBI:58165"/>
    </ligand>
</feature>
<feature type="binding site" evidence="9 19">
    <location>
        <begin position="242"/>
        <end position="243"/>
    </location>
    <ligand>
        <name>3',5'-cyclic GMP</name>
        <dbReference type="ChEBI" id="CHEBI:57746"/>
        <label>1</label>
    </ligand>
</feature>
<feature type="binding site" evidence="9 16">
    <location>
        <position position="347"/>
    </location>
    <ligand>
        <name>3',5'-cyclic GMP</name>
        <dbReference type="ChEBI" id="CHEBI:57746"/>
        <label>2</label>
    </ligand>
</feature>
<feature type="binding site" evidence="9 17">
    <location>
        <begin position="356"/>
        <end position="359"/>
    </location>
    <ligand>
        <name>3',5'-cyclic GMP</name>
        <dbReference type="ChEBI" id="CHEBI:57746"/>
        <label>2</label>
    </ligand>
</feature>
<feature type="binding site" evidence="9 17">
    <location>
        <begin position="366"/>
        <end position="367"/>
    </location>
    <ligand>
        <name>3',5'-cyclic GMP</name>
        <dbReference type="ChEBI" id="CHEBI:57746"/>
        <label>2</label>
    </ligand>
</feature>
<feature type="binding site" evidence="9 16">
    <location>
        <position position="412"/>
    </location>
    <ligand>
        <name>3',5'-cyclic GMP</name>
        <dbReference type="ChEBI" id="CHEBI:57746"/>
        <label>2</label>
    </ligand>
</feature>
<feature type="binding site" evidence="9 16">
    <location>
        <position position="415"/>
    </location>
    <ligand>
        <name>3',5'-cyclic GMP</name>
        <dbReference type="ChEBI" id="CHEBI:57746"/>
        <label>2</label>
    </ligand>
</feature>
<feature type="binding site" evidence="4">
    <location>
        <begin position="459"/>
        <end position="467"/>
    </location>
    <ligand>
        <name>ATP</name>
        <dbReference type="ChEBI" id="CHEBI:30616"/>
    </ligand>
</feature>
<feature type="binding site" evidence="4">
    <location>
        <position position="482"/>
    </location>
    <ligand>
        <name>ATP</name>
        <dbReference type="ChEBI" id="CHEBI:30616"/>
    </ligand>
</feature>
<feature type="modified residue" description="Phosphoserine" evidence="2">
    <location>
        <position position="110"/>
    </location>
</feature>
<feature type="modified residue" description="Phosphoserine" evidence="2">
    <location>
        <position position="117"/>
    </location>
</feature>
<feature type="modified residue" description="Phosphoserine" evidence="2">
    <location>
        <position position="431"/>
    </location>
</feature>
<feature type="modified residue" description="Phosphothreonine" evidence="1">
    <location>
        <position position="609"/>
    </location>
</feature>
<feature type="lipid moiety-binding region" description="N-myristoyl glycine" evidence="12">
    <location>
        <position position="2"/>
    </location>
</feature>
<feature type="splice variant" id="VSP_055121" description="In isoform 2." evidence="13">
    <location>
        <begin position="441"/>
        <end position="469"/>
    </location>
</feature>
<feature type="sequence variant" id="VAR_051633" description="In dbSNP:rs34956759.">
    <original>T</original>
    <variation>S</variation>
    <location>
        <position position="22"/>
    </location>
</feature>
<feature type="sequence variant" id="VAR_040608" description="In dbSNP:rs34616910." evidence="8">
    <original>H</original>
    <variation>R</variation>
    <location>
        <position position="106"/>
    </location>
</feature>
<feature type="sequence variant" id="VAR_086537" description="In AMD4; decreased protein abundance; unable to phosphorylate RAF1 in response to FGF2 and to inhibit FGF2-induced MAPK signaling; unable to suppress SOX9-induced COL2A1 expression; unable to upregulate COL10A1.">
    <location>
        <begin position="569"/>
        <end position="762"/>
    </location>
</feature>
<feature type="sequence variant" id="VAR_040609" description="In a colorectal adenocarcinoma sample; somatic mutation." evidence="8">
    <original>W</original>
    <variation>R</variation>
    <location>
        <position position="716"/>
    </location>
</feature>
<feature type="mutagenesis site" description="Reduces cGMP binding affinity; when associated with A-415." evidence="9">
    <original>D</original>
    <variation>A</variation>
    <location>
        <position position="412"/>
    </location>
</feature>
<feature type="mutagenesis site" description="Reduces cGMP binding affinity; when associated with A-412." evidence="9">
    <original>R</original>
    <variation>A</variation>
    <location>
        <position position="415"/>
    </location>
</feature>
<feature type="sequence conflict" description="In Ref. 2; BAA18934." evidence="14" ref="2">
    <original>QL</original>
    <variation>HG</variation>
    <location>
        <begin position="57"/>
        <end position="58"/>
    </location>
</feature>
<feature type="sequence conflict" description="In Ref. 5; CAA76073." evidence="14" ref="5">
    <original>S</original>
    <variation>I</variation>
    <location>
        <position position="154"/>
    </location>
</feature>
<feature type="sequence conflict" description="In Ref. 3; BAG60035." evidence="14" ref="3">
    <original>N</original>
    <variation>D</variation>
    <location>
        <position position="388"/>
    </location>
</feature>
<feature type="sequence conflict" description="In Ref. 2; BAA18934." evidence="14" ref="2">
    <original>G</original>
    <variation>A</variation>
    <location>
        <position position="460"/>
    </location>
</feature>
<feature type="helix" evidence="20">
    <location>
        <begin position="153"/>
        <end position="164"/>
    </location>
</feature>
<feature type="helix" evidence="20">
    <location>
        <begin position="169"/>
        <end position="171"/>
    </location>
</feature>
<feature type="helix" evidence="20">
    <location>
        <begin position="174"/>
        <end position="183"/>
    </location>
</feature>
<feature type="strand" evidence="20">
    <location>
        <begin position="185"/>
        <end position="189"/>
    </location>
</feature>
<feature type="strand" evidence="20">
    <location>
        <begin position="194"/>
        <end position="196"/>
    </location>
</feature>
<feature type="strand" evidence="20">
    <location>
        <begin position="204"/>
        <end position="211"/>
    </location>
</feature>
<feature type="strand" evidence="20">
    <location>
        <begin position="213"/>
        <end position="217"/>
    </location>
</feature>
<feature type="strand" evidence="20">
    <location>
        <begin position="220"/>
        <end position="224"/>
    </location>
</feature>
<feature type="strand" evidence="20">
    <location>
        <begin position="230"/>
        <end position="232"/>
    </location>
</feature>
<feature type="helix" evidence="20">
    <location>
        <begin position="233"/>
        <end position="238"/>
    </location>
</feature>
<feature type="strand" evidence="20">
    <location>
        <begin position="243"/>
        <end position="250"/>
    </location>
</feature>
<feature type="strand" evidence="20">
    <location>
        <begin position="252"/>
        <end position="258"/>
    </location>
</feature>
<feature type="helix" evidence="20">
    <location>
        <begin position="259"/>
        <end position="266"/>
    </location>
</feature>
<feature type="helix" evidence="21">
    <location>
        <begin position="270"/>
        <end position="282"/>
    </location>
</feature>
<feature type="helix" evidence="21">
    <location>
        <begin position="285"/>
        <end position="287"/>
    </location>
</feature>
<feature type="helix" evidence="21">
    <location>
        <begin position="292"/>
        <end position="301"/>
    </location>
</feature>
<feature type="strand" evidence="21">
    <location>
        <begin position="303"/>
        <end position="307"/>
    </location>
</feature>
<feature type="strand" evidence="21">
    <location>
        <begin position="312"/>
        <end position="314"/>
    </location>
</feature>
<feature type="strand" evidence="21">
    <location>
        <begin position="323"/>
        <end position="335"/>
    </location>
</feature>
<feature type="strand" evidence="21">
    <location>
        <begin position="344"/>
        <end position="350"/>
    </location>
</feature>
<feature type="helix" evidence="21">
    <location>
        <begin position="357"/>
        <end position="362"/>
    </location>
</feature>
<feature type="strand" evidence="21">
    <location>
        <begin position="368"/>
        <end position="372"/>
    </location>
</feature>
<feature type="strand" evidence="21">
    <location>
        <begin position="377"/>
        <end position="382"/>
    </location>
</feature>
<feature type="helix" evidence="21">
    <location>
        <begin position="384"/>
        <end position="389"/>
    </location>
</feature>
<feature type="helix" evidence="21">
    <location>
        <begin position="391"/>
        <end position="393"/>
    </location>
</feature>
<feature type="helix" evidence="21">
    <location>
        <begin position="395"/>
        <end position="414"/>
    </location>
</feature>
<protein>
    <recommendedName>
        <fullName>cGMP-dependent protein kinase 2</fullName>
        <shortName>cGK 2</shortName>
        <shortName>cGK2</shortName>
        <ecNumber>2.7.11.12</ecNumber>
    </recommendedName>
    <alternativeName>
        <fullName>cGMP-dependent protein kinase II</fullName>
        <shortName>cGKII</shortName>
    </alternativeName>
</protein>
<sequence>MGNGSVKPKHSKHPDGHSGNLTTDALRNKVTELERELRRKDAEIQEREYHLKELREQLSKQTVAIAELTEELQNKCIQLNKLQDVVHMQGGSPLQASPDKVPLEVHRKTSGLVSLHSRRGAKAGVSAEPTTRTYDLNKPPEFSFEKARVRKDSSEKKLITDALNKNQFLKRLDPQQIKDMVECMYGRNYQQGSYIIKQGEPGNHIFVLAEGRLEVFQGEKLLSSIPMWTTFGELAILYNCTRTASVKAITNVKTWALDREVFQNIMRRTAQARDEQYRNFLRSVSLLKNLPEDKLTKIIDCLEVEYYDKGDYIIREGEEGSTFFILAKGKVKVTQSTEGHDQPQLIKTLQKGEYFGEKALISDDVRSANIIAEENDVACLVIDRETFNQTVGTFEELQKYLEGYVANLNRDDEKRHAKRSMSNWKLSKALSLEMIQLKEKVARFSSSSPFQNLEIIATLGVGGFGRVELVKVKNENVAFAMKCIRKKHIVDTKQQEHVYSEKRILEELCSPFIVKLYRTFKDNKYVYMLLEACLGGELWSILRDRGSFDEPTSKFCVACVTEAFDYLHRLGIIYRDLKPENLILDAEGYLKLVDFGFAKKIGSGQKTWTFCGTPEYVAPEVILNKGHDFSVDFWSLGILVYELLTGNPPFSGVDQMMTYNLILKGIEKMDFPRKITRRPEDLIRRLCRQNPTERLGNLKNGINDIKKHRWLNGFNWEGLKARSLPSPLQRELKGPIDHSYFDKYPPEKGMPPDELSGWDKDF</sequence>
<keyword id="KW-0002">3D-structure</keyword>
<keyword id="KW-0025">Alternative splicing</keyword>
<keyword id="KW-0067">ATP-binding</keyword>
<keyword id="KW-1003">Cell membrane</keyword>
<keyword id="KW-0140">cGMP</keyword>
<keyword id="KW-0142">cGMP-binding</keyword>
<keyword id="KW-0175">Coiled coil</keyword>
<keyword id="KW-0225">Disease variant</keyword>
<keyword id="KW-0242">Dwarfism</keyword>
<keyword id="KW-0418">Kinase</keyword>
<keyword id="KW-0449">Lipoprotein</keyword>
<keyword id="KW-0472">Membrane</keyword>
<keyword id="KW-0519">Myristate</keyword>
<keyword id="KW-0547">Nucleotide-binding</keyword>
<keyword id="KW-0597">Phosphoprotein</keyword>
<keyword id="KW-1267">Proteomics identification</keyword>
<keyword id="KW-1185">Reference proteome</keyword>
<keyword id="KW-0723">Serine/threonine-protein kinase</keyword>
<keyword id="KW-0808">Transferase</keyword>
<proteinExistence type="evidence at protein level"/>
<accession>Q13237</accession>
<accession>B4DMX3</accession>
<accession>E7EPE6</accession>
<accession>O00125</accession>
<accession>O60916</accession>
<gene>
    <name type="primary">PRKG2</name>
    <name type="synonym">PRKGR2</name>
</gene>
<dbReference type="EC" id="2.7.11.12"/>
<dbReference type="EMBL" id="X94612">
    <property type="protein sequence ID" value="CAA64318.1"/>
    <property type="molecule type" value="mRNA"/>
</dbReference>
<dbReference type="EMBL" id="D70899">
    <property type="protein sequence ID" value="BAA18934.1"/>
    <property type="molecule type" value="mRNA"/>
</dbReference>
<dbReference type="EMBL" id="AK297673">
    <property type="protein sequence ID" value="BAG60035.1"/>
    <property type="molecule type" value="mRNA"/>
</dbReference>
<dbReference type="EMBL" id="AC098819">
    <property type="status" value="NOT_ANNOTATED_CDS"/>
    <property type="molecule type" value="Genomic_DNA"/>
</dbReference>
<dbReference type="EMBL" id="AC139722">
    <property type="status" value="NOT_ANNOTATED_CDS"/>
    <property type="molecule type" value="Genomic_DNA"/>
</dbReference>
<dbReference type="EMBL" id="Y16106">
    <property type="protein sequence ID" value="CAA76073.1"/>
    <property type="molecule type" value="Genomic_DNA"/>
</dbReference>
<dbReference type="EMBL" id="Y16107">
    <property type="protein sequence ID" value="CAA76073.1"/>
    <property type="status" value="JOINED"/>
    <property type="molecule type" value="Genomic_DNA"/>
</dbReference>
<dbReference type="EMBL" id="Y16108">
    <property type="protein sequence ID" value="CAA76073.1"/>
    <property type="status" value="JOINED"/>
    <property type="molecule type" value="Genomic_DNA"/>
</dbReference>
<dbReference type="EMBL" id="Y16109">
    <property type="protein sequence ID" value="CAA76073.1"/>
    <property type="status" value="JOINED"/>
    <property type="molecule type" value="Genomic_DNA"/>
</dbReference>
<dbReference type="EMBL" id="Y16110">
    <property type="protein sequence ID" value="CAA76073.1"/>
    <property type="status" value="JOINED"/>
    <property type="molecule type" value="Genomic_DNA"/>
</dbReference>
<dbReference type="EMBL" id="Y16111">
    <property type="protein sequence ID" value="CAA76073.1"/>
    <property type="status" value="JOINED"/>
    <property type="molecule type" value="Genomic_DNA"/>
</dbReference>
<dbReference type="EMBL" id="Y16112">
    <property type="protein sequence ID" value="CAA76073.1"/>
    <property type="status" value="JOINED"/>
    <property type="molecule type" value="Genomic_DNA"/>
</dbReference>
<dbReference type="EMBL" id="Y16113">
    <property type="protein sequence ID" value="CAA76073.1"/>
    <property type="status" value="JOINED"/>
    <property type="molecule type" value="Genomic_DNA"/>
</dbReference>
<dbReference type="EMBL" id="Y16114">
    <property type="protein sequence ID" value="CAA76073.1"/>
    <property type="status" value="JOINED"/>
    <property type="molecule type" value="Genomic_DNA"/>
</dbReference>
<dbReference type="EMBL" id="Y16115">
    <property type="protein sequence ID" value="CAA76073.1"/>
    <property type="status" value="JOINED"/>
    <property type="molecule type" value="Genomic_DNA"/>
</dbReference>
<dbReference type="EMBL" id="Y16116">
    <property type="protein sequence ID" value="CAA76073.1"/>
    <property type="status" value="JOINED"/>
    <property type="molecule type" value="Genomic_DNA"/>
</dbReference>
<dbReference type="EMBL" id="Y16117">
    <property type="protein sequence ID" value="CAA76073.1"/>
    <property type="status" value="JOINED"/>
    <property type="molecule type" value="Genomic_DNA"/>
</dbReference>
<dbReference type="EMBL" id="Y16118">
    <property type="protein sequence ID" value="CAA76073.1"/>
    <property type="status" value="JOINED"/>
    <property type="molecule type" value="Genomic_DNA"/>
</dbReference>
<dbReference type="EMBL" id="Y16119">
    <property type="protein sequence ID" value="CAA76073.1"/>
    <property type="status" value="JOINED"/>
    <property type="molecule type" value="Genomic_DNA"/>
</dbReference>
<dbReference type="EMBL" id="Y16120">
    <property type="protein sequence ID" value="CAA76073.1"/>
    <property type="status" value="JOINED"/>
    <property type="molecule type" value="Genomic_DNA"/>
</dbReference>
<dbReference type="EMBL" id="Y16121">
    <property type="protein sequence ID" value="CAA76073.1"/>
    <property type="status" value="JOINED"/>
    <property type="molecule type" value="Genomic_DNA"/>
</dbReference>
<dbReference type="EMBL" id="Y16122">
    <property type="protein sequence ID" value="CAA76073.1"/>
    <property type="status" value="JOINED"/>
    <property type="molecule type" value="Genomic_DNA"/>
</dbReference>
<dbReference type="EMBL" id="Y16123">
    <property type="protein sequence ID" value="CAA76073.1"/>
    <property type="status" value="JOINED"/>
    <property type="molecule type" value="Genomic_DNA"/>
</dbReference>
<dbReference type="CCDS" id="CCDS3589.1">
    <molecule id="Q13237-1"/>
</dbReference>
<dbReference type="CCDS" id="CCDS64005.1">
    <molecule id="Q13237-2"/>
</dbReference>
<dbReference type="PIR" id="S68217">
    <property type="entry name" value="S68217"/>
</dbReference>
<dbReference type="RefSeq" id="NP_001269409.1">
    <property type="nucleotide sequence ID" value="NM_001282480.1"/>
</dbReference>
<dbReference type="RefSeq" id="NP_001269410.1">
    <property type="nucleotide sequence ID" value="NM_001282481.1"/>
</dbReference>
<dbReference type="RefSeq" id="NP_001269411.1">
    <property type="nucleotide sequence ID" value="NM_001282482.1"/>
</dbReference>
<dbReference type="RefSeq" id="NP_001269412.1">
    <property type="nucleotide sequence ID" value="NM_001282483.1"/>
</dbReference>
<dbReference type="RefSeq" id="NP_001269414.1">
    <molecule id="Q13237-2"/>
    <property type="nucleotide sequence ID" value="NM_001282485.2"/>
</dbReference>
<dbReference type="RefSeq" id="NP_001350330.1">
    <molecule id="Q13237-1"/>
    <property type="nucleotide sequence ID" value="NM_001363401.2"/>
</dbReference>
<dbReference type="RefSeq" id="NP_006250.1">
    <molecule id="Q13237-1"/>
    <property type="nucleotide sequence ID" value="NM_006259.3"/>
</dbReference>
<dbReference type="RefSeq" id="XP_005263183.1">
    <property type="nucleotide sequence ID" value="XM_005263126.3"/>
</dbReference>
<dbReference type="RefSeq" id="XP_016863904.2">
    <molecule id="Q13237-1"/>
    <property type="nucleotide sequence ID" value="XM_017008415.2"/>
</dbReference>
<dbReference type="RefSeq" id="XP_016863905.2">
    <molecule id="Q13237-1"/>
    <property type="nucleotide sequence ID" value="XM_017008416.2"/>
</dbReference>
<dbReference type="RefSeq" id="XP_047271919.1">
    <molecule id="Q13237-1"/>
    <property type="nucleotide sequence ID" value="XM_047415963.1"/>
</dbReference>
<dbReference type="RefSeq" id="XP_054206479.1">
    <molecule id="Q13237-1"/>
    <property type="nucleotide sequence ID" value="XM_054350504.1"/>
</dbReference>
<dbReference type="RefSeq" id="XP_054206480.1">
    <molecule id="Q13237-1"/>
    <property type="nucleotide sequence ID" value="XM_054350505.1"/>
</dbReference>
<dbReference type="PDB" id="5BV6">
    <property type="method" value="X-ray"/>
    <property type="resolution" value="1.94 A"/>
    <property type="chains" value="A=269-418"/>
</dbReference>
<dbReference type="PDB" id="5C6C">
    <property type="method" value="X-ray"/>
    <property type="resolution" value="2.05 A"/>
    <property type="chains" value="A/B=137-277"/>
</dbReference>
<dbReference type="PDB" id="5C8W">
    <property type="method" value="X-ray"/>
    <property type="resolution" value="1.80 A"/>
    <property type="chains" value="A/B/C/D/E/F=137-277"/>
</dbReference>
<dbReference type="PDB" id="5JIX">
    <property type="method" value="X-ray"/>
    <property type="resolution" value="1.47 A"/>
    <property type="chains" value="A=269-418"/>
</dbReference>
<dbReference type="PDB" id="5JIZ">
    <property type="method" value="X-ray"/>
    <property type="resolution" value="1.50 A"/>
    <property type="chains" value="A=269-418"/>
</dbReference>
<dbReference type="PDB" id="6BQ8">
    <property type="method" value="Other"/>
    <property type="resolution" value="2.00 A"/>
    <property type="chains" value="A=269-418"/>
</dbReference>
<dbReference type="PDBsum" id="5BV6"/>
<dbReference type="PDBsum" id="5C6C"/>
<dbReference type="PDBsum" id="5C8W"/>
<dbReference type="PDBsum" id="5JIX"/>
<dbReference type="PDBsum" id="5JIZ"/>
<dbReference type="PDBsum" id="6BQ8"/>
<dbReference type="SMR" id="Q13237"/>
<dbReference type="BioGRID" id="111579">
    <property type="interactions" value="11"/>
</dbReference>
<dbReference type="FunCoup" id="Q13237">
    <property type="interactions" value="1123"/>
</dbReference>
<dbReference type="IntAct" id="Q13237">
    <property type="interactions" value="4"/>
</dbReference>
<dbReference type="STRING" id="9606.ENSP00000264399"/>
<dbReference type="BindingDB" id="Q13237"/>
<dbReference type="ChEMBL" id="CHEMBL2896"/>
<dbReference type="DrugBank" id="DB12010">
    <property type="generic name" value="Fostamatinib"/>
</dbReference>
<dbReference type="DrugCentral" id="Q13237"/>
<dbReference type="GuidetoPHARMACOLOGY" id="1493"/>
<dbReference type="iPTMnet" id="Q13237"/>
<dbReference type="PhosphoSitePlus" id="Q13237"/>
<dbReference type="BioMuta" id="PRKG2"/>
<dbReference type="DMDM" id="6226833"/>
<dbReference type="jPOST" id="Q13237"/>
<dbReference type="MassIVE" id="Q13237"/>
<dbReference type="PaxDb" id="9606-ENSP00000264399"/>
<dbReference type="PeptideAtlas" id="Q13237"/>
<dbReference type="ProteomicsDB" id="17341"/>
<dbReference type="ProteomicsDB" id="59241">
    <molecule id="Q13237-1"/>
</dbReference>
<dbReference type="Antibodypedia" id="1102">
    <property type="antibodies" value="255 antibodies from 31 providers"/>
</dbReference>
<dbReference type="DNASU" id="5593"/>
<dbReference type="Ensembl" id="ENST00000264399.6">
    <molecule id="Q13237-1"/>
    <property type="protein sequence ID" value="ENSP00000264399.1"/>
    <property type="gene ID" value="ENSG00000138669.10"/>
</dbReference>
<dbReference type="Ensembl" id="ENST00000395578.3">
    <molecule id="Q13237-1"/>
    <property type="protein sequence ID" value="ENSP00000378945.1"/>
    <property type="gene ID" value="ENSG00000138669.10"/>
</dbReference>
<dbReference type="Ensembl" id="ENST00000628926.1">
    <molecule id="Q13237-2"/>
    <property type="protein sequence ID" value="ENSP00000486129.1"/>
    <property type="gene ID" value="ENSG00000138669.10"/>
</dbReference>
<dbReference type="GeneID" id="5593"/>
<dbReference type="KEGG" id="hsa:5593"/>
<dbReference type="MANE-Select" id="ENST00000264399.6">
    <property type="protein sequence ID" value="ENSP00000264399.1"/>
    <property type="RefSeq nucleotide sequence ID" value="NM_006259.3"/>
    <property type="RefSeq protein sequence ID" value="NP_006250.1"/>
</dbReference>
<dbReference type="UCSC" id="uc003hmh.3">
    <molecule id="Q13237-1"/>
    <property type="organism name" value="human"/>
</dbReference>
<dbReference type="AGR" id="HGNC:9416"/>
<dbReference type="CTD" id="5593"/>
<dbReference type="DisGeNET" id="5593"/>
<dbReference type="GeneCards" id="PRKG2"/>
<dbReference type="HGNC" id="HGNC:9416">
    <property type="gene designation" value="PRKG2"/>
</dbReference>
<dbReference type="HPA" id="ENSG00000138669">
    <property type="expression patterns" value="Tissue enhanced (intestine, prostate)"/>
</dbReference>
<dbReference type="MalaCards" id="PRKG2"/>
<dbReference type="MIM" id="601591">
    <property type="type" value="gene"/>
</dbReference>
<dbReference type="MIM" id="619636">
    <property type="type" value="phenotype"/>
</dbReference>
<dbReference type="MIM" id="619638">
    <property type="type" value="phenotype"/>
</dbReference>
<dbReference type="neXtProt" id="NX_Q13237"/>
<dbReference type="OpenTargets" id="ENSG00000138669"/>
<dbReference type="PharmGKB" id="PA33778"/>
<dbReference type="VEuPathDB" id="HostDB:ENSG00000138669"/>
<dbReference type="eggNOG" id="KOG0614">
    <property type="taxonomic scope" value="Eukaryota"/>
</dbReference>
<dbReference type="GeneTree" id="ENSGT00940000159393"/>
<dbReference type="HOGENOM" id="CLU_000288_73_2_1"/>
<dbReference type="InParanoid" id="Q13237"/>
<dbReference type="OMA" id="YSYFDRY"/>
<dbReference type="OrthoDB" id="63267at2759"/>
<dbReference type="PAN-GO" id="Q13237">
    <property type="GO annotations" value="0 GO annotations based on evolutionary models"/>
</dbReference>
<dbReference type="PhylomeDB" id="Q13237"/>
<dbReference type="TreeFam" id="TF313261"/>
<dbReference type="BRENDA" id="2.7.11.12">
    <property type="organism ID" value="2681"/>
</dbReference>
<dbReference type="PathwayCommons" id="Q13237"/>
<dbReference type="Reactome" id="R-HSA-1474151">
    <property type="pathway name" value="Tetrahydrobiopterin (BH4) synthesis, recycling, salvage and regulation"/>
</dbReference>
<dbReference type="Reactome" id="R-HSA-4086398">
    <property type="pathway name" value="Ca2+ pathway"/>
</dbReference>
<dbReference type="Reactome" id="R-HSA-418457">
    <property type="pathway name" value="cGMP effects"/>
</dbReference>
<dbReference type="Reactome" id="R-HSA-9648002">
    <property type="pathway name" value="RAS processing"/>
</dbReference>
<dbReference type="SignaLink" id="Q13237"/>
<dbReference type="SIGNOR" id="Q13237"/>
<dbReference type="BioGRID-ORCS" id="5593">
    <property type="hits" value="14 hits in 1178 CRISPR screens"/>
</dbReference>
<dbReference type="ChiTaRS" id="PRKG2">
    <property type="organism name" value="human"/>
</dbReference>
<dbReference type="EvolutionaryTrace" id="Q13237"/>
<dbReference type="GenomeRNAi" id="5593"/>
<dbReference type="Pharos" id="Q13237">
    <property type="development level" value="Tchem"/>
</dbReference>
<dbReference type="PRO" id="PR:Q13237"/>
<dbReference type="Proteomes" id="UP000005640">
    <property type="component" value="Chromosome 4"/>
</dbReference>
<dbReference type="RNAct" id="Q13237">
    <property type="molecule type" value="protein"/>
</dbReference>
<dbReference type="Bgee" id="ENSG00000138669">
    <property type="expression patterns" value="Expressed in jejunal mucosa and 111 other cell types or tissues"/>
</dbReference>
<dbReference type="ExpressionAtlas" id="Q13237">
    <property type="expression patterns" value="baseline and differential"/>
</dbReference>
<dbReference type="GO" id="GO:0016324">
    <property type="term" value="C:apical plasma membrane"/>
    <property type="evidence" value="ECO:0007669"/>
    <property type="project" value="UniProtKB-SubCell"/>
</dbReference>
<dbReference type="GO" id="GO:0005829">
    <property type="term" value="C:cytosol"/>
    <property type="evidence" value="ECO:0000304"/>
    <property type="project" value="Reactome"/>
</dbReference>
<dbReference type="GO" id="GO:0031965">
    <property type="term" value="C:nuclear membrane"/>
    <property type="evidence" value="ECO:0007669"/>
    <property type="project" value="Ensembl"/>
</dbReference>
<dbReference type="GO" id="GO:0005524">
    <property type="term" value="F:ATP binding"/>
    <property type="evidence" value="ECO:0007669"/>
    <property type="project" value="UniProtKB-KW"/>
</dbReference>
<dbReference type="GO" id="GO:0030553">
    <property type="term" value="F:cGMP binding"/>
    <property type="evidence" value="ECO:0007669"/>
    <property type="project" value="UniProtKB-KW"/>
</dbReference>
<dbReference type="GO" id="GO:0004692">
    <property type="term" value="F:cGMP-dependent protein kinase activity"/>
    <property type="evidence" value="ECO:0000315"/>
    <property type="project" value="UniProtKB"/>
</dbReference>
<dbReference type="GO" id="GO:0042802">
    <property type="term" value="F:identical protein binding"/>
    <property type="evidence" value="ECO:0007669"/>
    <property type="project" value="Ensembl"/>
</dbReference>
<dbReference type="GO" id="GO:0051019">
    <property type="term" value="F:mitogen-activated protein kinase binding"/>
    <property type="evidence" value="ECO:0000315"/>
    <property type="project" value="UniProtKB"/>
</dbReference>
<dbReference type="GO" id="GO:0004672">
    <property type="term" value="F:protein kinase activity"/>
    <property type="evidence" value="ECO:0000304"/>
    <property type="project" value="ProtInc"/>
</dbReference>
<dbReference type="GO" id="GO:0106310">
    <property type="term" value="F:protein serine kinase activity"/>
    <property type="evidence" value="ECO:0000315"/>
    <property type="project" value="UniProtKB"/>
</dbReference>
<dbReference type="GO" id="GO:2001226">
    <property type="term" value="P:negative regulation of chloride transport"/>
    <property type="evidence" value="ECO:0007669"/>
    <property type="project" value="Ensembl"/>
</dbReference>
<dbReference type="GO" id="GO:0032332">
    <property type="term" value="P:positive regulation of chondrocyte differentiation"/>
    <property type="evidence" value="ECO:0007669"/>
    <property type="project" value="Ensembl"/>
</dbReference>
<dbReference type="GO" id="GO:1903829">
    <property type="term" value="P:positive regulation of protein localization"/>
    <property type="evidence" value="ECO:0007669"/>
    <property type="project" value="Ensembl"/>
</dbReference>
<dbReference type="GO" id="GO:0072659">
    <property type="term" value="P:protein localization to plasma membrane"/>
    <property type="evidence" value="ECO:0007669"/>
    <property type="project" value="Ensembl"/>
</dbReference>
<dbReference type="GO" id="GO:0006468">
    <property type="term" value="P:protein phosphorylation"/>
    <property type="evidence" value="ECO:0000315"/>
    <property type="project" value="UniProtKB"/>
</dbReference>
<dbReference type="GO" id="GO:0007165">
    <property type="term" value="P:signal transduction"/>
    <property type="evidence" value="ECO:0000315"/>
    <property type="project" value="UniProtKB"/>
</dbReference>
<dbReference type="GO" id="GO:0046146">
    <property type="term" value="P:tetrahydrobiopterin metabolic process"/>
    <property type="evidence" value="ECO:0000304"/>
    <property type="project" value="Reactome"/>
</dbReference>
<dbReference type="CDD" id="cd00038">
    <property type="entry name" value="CAP_ED"/>
    <property type="match status" value="2"/>
</dbReference>
<dbReference type="CDD" id="cd05572">
    <property type="entry name" value="STKc_cGK"/>
    <property type="match status" value="1"/>
</dbReference>
<dbReference type="FunFam" id="3.30.200.20:FF:000005">
    <property type="entry name" value="cAMP-dependent protein kinase catalytic subunit"/>
    <property type="match status" value="1"/>
</dbReference>
<dbReference type="FunFam" id="1.10.510.10:FF:000096">
    <property type="entry name" value="cGMP-dependent protein kinase"/>
    <property type="match status" value="1"/>
</dbReference>
<dbReference type="FunFam" id="2.60.120.10:FF:000038">
    <property type="entry name" value="cGMP-dependent protein kinase"/>
    <property type="match status" value="1"/>
</dbReference>
<dbReference type="FunFam" id="2.60.120.10:FF:000043">
    <property type="entry name" value="cGMP-dependent protein kinase"/>
    <property type="match status" value="1"/>
</dbReference>
<dbReference type="Gene3D" id="2.60.120.10">
    <property type="entry name" value="Jelly Rolls"/>
    <property type="match status" value="2"/>
</dbReference>
<dbReference type="Gene3D" id="3.30.200.20">
    <property type="entry name" value="Phosphorylase Kinase, domain 1"/>
    <property type="match status" value="1"/>
</dbReference>
<dbReference type="Gene3D" id="1.10.510.10">
    <property type="entry name" value="Transferase(Phosphotransferase) domain 1"/>
    <property type="match status" value="1"/>
</dbReference>
<dbReference type="InterPro" id="IPR000961">
    <property type="entry name" value="AGC-kinase_C"/>
</dbReference>
<dbReference type="InterPro" id="IPR002374">
    <property type="entry name" value="cGMP_dep_kinase"/>
</dbReference>
<dbReference type="InterPro" id="IPR018488">
    <property type="entry name" value="cNMP-bd_CS"/>
</dbReference>
<dbReference type="InterPro" id="IPR000595">
    <property type="entry name" value="cNMP-bd_dom"/>
</dbReference>
<dbReference type="InterPro" id="IPR018490">
    <property type="entry name" value="cNMP-bd_dom_sf"/>
</dbReference>
<dbReference type="InterPro" id="IPR011009">
    <property type="entry name" value="Kinase-like_dom_sf"/>
</dbReference>
<dbReference type="InterPro" id="IPR000719">
    <property type="entry name" value="Prot_kinase_dom"/>
</dbReference>
<dbReference type="InterPro" id="IPR017441">
    <property type="entry name" value="Protein_kinase_ATP_BS"/>
</dbReference>
<dbReference type="InterPro" id="IPR014710">
    <property type="entry name" value="RmlC-like_jellyroll"/>
</dbReference>
<dbReference type="InterPro" id="IPR008271">
    <property type="entry name" value="Ser/Thr_kinase_AS"/>
</dbReference>
<dbReference type="InterPro" id="IPR035014">
    <property type="entry name" value="STKc_cGK"/>
</dbReference>
<dbReference type="PANTHER" id="PTHR24353:SF24">
    <property type="match status" value="1"/>
</dbReference>
<dbReference type="PANTHER" id="PTHR24353">
    <property type="entry name" value="CYCLIC NUCLEOTIDE-DEPENDENT PROTEIN KINASE"/>
    <property type="match status" value="1"/>
</dbReference>
<dbReference type="Pfam" id="PF00027">
    <property type="entry name" value="cNMP_binding"/>
    <property type="match status" value="2"/>
</dbReference>
<dbReference type="Pfam" id="PF00069">
    <property type="entry name" value="Pkinase"/>
    <property type="match status" value="1"/>
</dbReference>
<dbReference type="PIRSF" id="PIRSF000559">
    <property type="entry name" value="cGMP-dep_kinase"/>
    <property type="match status" value="1"/>
</dbReference>
<dbReference type="PRINTS" id="PR00104">
    <property type="entry name" value="CGMPKINASE"/>
</dbReference>
<dbReference type="SMART" id="SM00100">
    <property type="entry name" value="cNMP"/>
    <property type="match status" value="2"/>
</dbReference>
<dbReference type="SMART" id="SM00133">
    <property type="entry name" value="S_TK_X"/>
    <property type="match status" value="1"/>
</dbReference>
<dbReference type="SMART" id="SM00220">
    <property type="entry name" value="S_TKc"/>
    <property type="match status" value="1"/>
</dbReference>
<dbReference type="SUPFAM" id="SSF51206">
    <property type="entry name" value="cAMP-binding domain-like"/>
    <property type="match status" value="2"/>
</dbReference>
<dbReference type="SUPFAM" id="SSF56112">
    <property type="entry name" value="Protein kinase-like (PK-like)"/>
    <property type="match status" value="1"/>
</dbReference>
<dbReference type="PROSITE" id="PS51285">
    <property type="entry name" value="AGC_KINASE_CTER"/>
    <property type="match status" value="1"/>
</dbReference>
<dbReference type="PROSITE" id="PS00888">
    <property type="entry name" value="CNMP_BINDING_1"/>
    <property type="match status" value="2"/>
</dbReference>
<dbReference type="PROSITE" id="PS00889">
    <property type="entry name" value="CNMP_BINDING_2"/>
    <property type="match status" value="2"/>
</dbReference>
<dbReference type="PROSITE" id="PS50042">
    <property type="entry name" value="CNMP_BINDING_3"/>
    <property type="match status" value="2"/>
</dbReference>
<dbReference type="PROSITE" id="PS00107">
    <property type="entry name" value="PROTEIN_KINASE_ATP"/>
    <property type="match status" value="1"/>
</dbReference>
<dbReference type="PROSITE" id="PS50011">
    <property type="entry name" value="PROTEIN_KINASE_DOM"/>
    <property type="match status" value="1"/>
</dbReference>
<dbReference type="PROSITE" id="PS00108">
    <property type="entry name" value="PROTEIN_KINASE_ST"/>
    <property type="match status" value="1"/>
</dbReference>